<proteinExistence type="inferred from homology"/>
<name>GPSB_STRZJ</name>
<protein>
    <recommendedName>
        <fullName evidence="1">Cell cycle protein GpsB</fullName>
    </recommendedName>
    <alternativeName>
        <fullName evidence="1">Guiding PBP1-shuttling protein</fullName>
    </alternativeName>
</protein>
<sequence length="109" mass="12575">MASIIFSAKDIFEQEFGREVRGYNKVEVDEFLDDVIKDYETYAALVKSLRQEIADLKEELTRKPKPSPVQAEPLEAAITSSMTNFDILKRLNRLEKEVFGKQILDNSDF</sequence>
<reference key="1">
    <citation type="journal article" date="2010" name="Genome Biol.">
        <title>Structure and dynamics of the pan-genome of Streptococcus pneumoniae and closely related species.</title>
        <authorList>
            <person name="Donati C."/>
            <person name="Hiller N.L."/>
            <person name="Tettelin H."/>
            <person name="Muzzi A."/>
            <person name="Croucher N.J."/>
            <person name="Angiuoli S.V."/>
            <person name="Oggioni M."/>
            <person name="Dunning Hotopp J.C."/>
            <person name="Hu F.Z."/>
            <person name="Riley D.R."/>
            <person name="Covacci A."/>
            <person name="Mitchell T.J."/>
            <person name="Bentley S.D."/>
            <person name="Kilian M."/>
            <person name="Ehrlich G.D."/>
            <person name="Rappuoli R."/>
            <person name="Moxon E.R."/>
            <person name="Masignani V."/>
        </authorList>
    </citation>
    <scope>NUCLEOTIDE SEQUENCE [LARGE SCALE GENOMIC DNA]</scope>
    <source>
        <strain>JJA</strain>
    </source>
</reference>
<keyword id="KW-0131">Cell cycle</keyword>
<keyword id="KW-0132">Cell division</keyword>
<keyword id="KW-0133">Cell shape</keyword>
<keyword id="KW-0175">Coiled coil</keyword>
<keyword id="KW-0963">Cytoplasm</keyword>
<feature type="chain" id="PRO_1000189503" description="Cell cycle protein GpsB">
    <location>
        <begin position="1"/>
        <end position="109"/>
    </location>
</feature>
<feature type="coiled-coil region" evidence="1">
    <location>
        <begin position="36"/>
        <end position="63"/>
    </location>
</feature>
<organism>
    <name type="scientific">Streptococcus pneumoniae (strain JJA)</name>
    <dbReference type="NCBI Taxonomy" id="488222"/>
    <lineage>
        <taxon>Bacteria</taxon>
        <taxon>Bacillati</taxon>
        <taxon>Bacillota</taxon>
        <taxon>Bacilli</taxon>
        <taxon>Lactobacillales</taxon>
        <taxon>Streptococcaceae</taxon>
        <taxon>Streptococcus</taxon>
    </lineage>
</organism>
<accession>C1CCD7</accession>
<comment type="function">
    <text evidence="1">Divisome component that associates with the complex late in its assembly, after the Z-ring is formed, and is dependent on DivIC and PBP2B for its recruitment to the divisome. Together with EzrA, is a key component of the system that regulates PBP1 localization during cell cycle progression. Its main role could be the removal of PBP1 from the cell pole after pole maturation is completed. Also contributes to the recruitment of PBP1 to the division complex. Not essential for septum formation.</text>
</comment>
<comment type="subunit">
    <text evidence="1">Forms polymers through the coiled coil domains. Interacts with PBP1, MreC and EzrA.</text>
</comment>
<comment type="subcellular location">
    <subcellularLocation>
        <location evidence="1">Cytoplasm</location>
    </subcellularLocation>
    <text evidence="1">Shuttles between the lateral wall and the division site in a cell cycle-dependent manner.</text>
</comment>
<comment type="similarity">
    <text evidence="1">Belongs to the GpsB family.</text>
</comment>
<dbReference type="EMBL" id="CP000919">
    <property type="protein sequence ID" value="ACO19354.1"/>
    <property type="molecule type" value="Genomic_DNA"/>
</dbReference>
<dbReference type="RefSeq" id="WP_000146522.1">
    <property type="nucleotide sequence ID" value="NC_012466.1"/>
</dbReference>
<dbReference type="SMR" id="C1CCD7"/>
<dbReference type="GeneID" id="45652165"/>
<dbReference type="KEGG" id="sjj:SPJ_0358"/>
<dbReference type="HOGENOM" id="CLU_140309_1_0_9"/>
<dbReference type="Proteomes" id="UP000002206">
    <property type="component" value="Chromosome"/>
</dbReference>
<dbReference type="GO" id="GO:0005737">
    <property type="term" value="C:cytoplasm"/>
    <property type="evidence" value="ECO:0007669"/>
    <property type="project" value="UniProtKB-SubCell"/>
</dbReference>
<dbReference type="GO" id="GO:0051301">
    <property type="term" value="P:cell division"/>
    <property type="evidence" value="ECO:0007669"/>
    <property type="project" value="UniProtKB-UniRule"/>
</dbReference>
<dbReference type="GO" id="GO:0008360">
    <property type="term" value="P:regulation of cell shape"/>
    <property type="evidence" value="ECO:0007669"/>
    <property type="project" value="UniProtKB-UniRule"/>
</dbReference>
<dbReference type="Gene3D" id="6.10.250.660">
    <property type="match status" value="1"/>
</dbReference>
<dbReference type="HAMAP" id="MF_02011">
    <property type="entry name" value="GpsB"/>
    <property type="match status" value="1"/>
</dbReference>
<dbReference type="InterPro" id="IPR011229">
    <property type="entry name" value="Cell_cycle_GpsB"/>
</dbReference>
<dbReference type="InterPro" id="IPR019933">
    <property type="entry name" value="DivIVA_domain"/>
</dbReference>
<dbReference type="InterPro" id="IPR007793">
    <property type="entry name" value="DivIVA_fam"/>
</dbReference>
<dbReference type="NCBIfam" id="TIGR03544">
    <property type="entry name" value="DivI1A_domain"/>
    <property type="match status" value="1"/>
</dbReference>
<dbReference type="NCBIfam" id="NF010725">
    <property type="entry name" value="PRK14127.1"/>
    <property type="match status" value="1"/>
</dbReference>
<dbReference type="PANTHER" id="PTHR35794:SF1">
    <property type="entry name" value="CELL CYCLE PROTEIN GPSB"/>
    <property type="match status" value="1"/>
</dbReference>
<dbReference type="PANTHER" id="PTHR35794">
    <property type="entry name" value="CELL DIVISION PROTEIN DIVIVA"/>
    <property type="match status" value="1"/>
</dbReference>
<dbReference type="Pfam" id="PF05103">
    <property type="entry name" value="DivIVA"/>
    <property type="match status" value="1"/>
</dbReference>
<dbReference type="PIRSF" id="PIRSF029938">
    <property type="entry name" value="UCP029938"/>
    <property type="match status" value="1"/>
</dbReference>
<gene>
    <name evidence="1" type="primary">gpsB</name>
    <name type="ordered locus">SPJ_0358</name>
</gene>
<evidence type="ECO:0000255" key="1">
    <source>
        <dbReference type="HAMAP-Rule" id="MF_02011"/>
    </source>
</evidence>